<protein>
    <recommendedName>
        <fullName evidence="1">Ribosomal RNA small subunit methyltransferase A</fullName>
        <ecNumber evidence="1">2.1.1.182</ecNumber>
    </recommendedName>
    <alternativeName>
        <fullName evidence="1">16S rRNA (adenine(1518)-N(6)/adenine(1519)-N(6))-dimethyltransferase</fullName>
    </alternativeName>
    <alternativeName>
        <fullName evidence="1">16S rRNA dimethyladenosine transferase</fullName>
    </alternativeName>
    <alternativeName>
        <fullName evidence="1">16S rRNA dimethylase</fullName>
    </alternativeName>
    <alternativeName>
        <fullName evidence="1">S-adenosylmethionine-6-N', N'-adenosyl(rRNA) dimethyltransferase</fullName>
    </alternativeName>
</protein>
<name>RSMA_PROA2</name>
<sequence>MTKVQYKHTEIAVKKKLGQNFLTDRNTIRKIVQSAEIQPGDHVVEIGPGFGALTSAILEVCPSFTAVEKDRKLADFIREEYPSVNLVESDILEVDFAKLAEEGPVKVMGNIPYSITSPILFKLLENRSHIISETLMMQHEVALRLAANPGTKEYGILAVQLQTFCDVRYLFKVGKKVFRPRPEVDSAVVRIVPKKTPLDDCETEFRRFVRLAFQQRRKTLQNNLKQHYDISQLSASELQRRAESFTITEFEMLFSRIRPLQ</sequence>
<reference key="1">
    <citation type="submission" date="2008-06" db="EMBL/GenBank/DDBJ databases">
        <title>Complete sequence of chromosome of Prosthecochloris aestuarii DSM 271.</title>
        <authorList>
            <consortium name="US DOE Joint Genome Institute"/>
            <person name="Lucas S."/>
            <person name="Copeland A."/>
            <person name="Lapidus A."/>
            <person name="Glavina del Rio T."/>
            <person name="Dalin E."/>
            <person name="Tice H."/>
            <person name="Bruce D."/>
            <person name="Goodwin L."/>
            <person name="Pitluck S."/>
            <person name="Schmutz J."/>
            <person name="Larimer F."/>
            <person name="Land M."/>
            <person name="Hauser L."/>
            <person name="Kyrpides N."/>
            <person name="Anderson I."/>
            <person name="Liu Z."/>
            <person name="Li T."/>
            <person name="Zhao F."/>
            <person name="Overmann J."/>
            <person name="Bryant D.A."/>
            <person name="Richardson P."/>
        </authorList>
    </citation>
    <scope>NUCLEOTIDE SEQUENCE [LARGE SCALE GENOMIC DNA]</scope>
    <source>
        <strain>DSM 271 / SK 413</strain>
    </source>
</reference>
<keyword id="KW-0963">Cytoplasm</keyword>
<keyword id="KW-0489">Methyltransferase</keyword>
<keyword id="KW-0694">RNA-binding</keyword>
<keyword id="KW-0698">rRNA processing</keyword>
<keyword id="KW-0949">S-adenosyl-L-methionine</keyword>
<keyword id="KW-0808">Transferase</keyword>
<organism>
    <name type="scientific">Prosthecochloris aestuarii (strain DSM 271 / SK 413)</name>
    <dbReference type="NCBI Taxonomy" id="290512"/>
    <lineage>
        <taxon>Bacteria</taxon>
        <taxon>Pseudomonadati</taxon>
        <taxon>Chlorobiota</taxon>
        <taxon>Chlorobiia</taxon>
        <taxon>Chlorobiales</taxon>
        <taxon>Chlorobiaceae</taxon>
        <taxon>Prosthecochloris</taxon>
    </lineage>
</organism>
<evidence type="ECO:0000255" key="1">
    <source>
        <dbReference type="HAMAP-Rule" id="MF_00607"/>
    </source>
</evidence>
<feature type="chain" id="PRO_1000130306" description="Ribosomal RNA small subunit methyltransferase A">
    <location>
        <begin position="1"/>
        <end position="261"/>
    </location>
</feature>
<feature type="binding site" evidence="1">
    <location>
        <position position="20"/>
    </location>
    <ligand>
        <name>S-adenosyl-L-methionine</name>
        <dbReference type="ChEBI" id="CHEBI:59789"/>
    </ligand>
</feature>
<feature type="binding site" evidence="1">
    <location>
        <position position="22"/>
    </location>
    <ligand>
        <name>S-adenosyl-L-methionine</name>
        <dbReference type="ChEBI" id="CHEBI:59789"/>
    </ligand>
</feature>
<feature type="binding site" evidence="1">
    <location>
        <position position="47"/>
    </location>
    <ligand>
        <name>S-adenosyl-L-methionine</name>
        <dbReference type="ChEBI" id="CHEBI:59789"/>
    </ligand>
</feature>
<feature type="binding site" evidence="1">
    <location>
        <position position="68"/>
    </location>
    <ligand>
        <name>S-adenosyl-L-methionine</name>
        <dbReference type="ChEBI" id="CHEBI:59789"/>
    </ligand>
</feature>
<feature type="binding site" evidence="1">
    <location>
        <position position="90"/>
    </location>
    <ligand>
        <name>S-adenosyl-L-methionine</name>
        <dbReference type="ChEBI" id="CHEBI:59789"/>
    </ligand>
</feature>
<feature type="binding site" evidence="1">
    <location>
        <position position="110"/>
    </location>
    <ligand>
        <name>S-adenosyl-L-methionine</name>
        <dbReference type="ChEBI" id="CHEBI:59789"/>
    </ligand>
</feature>
<dbReference type="EC" id="2.1.1.182" evidence="1"/>
<dbReference type="EMBL" id="CP001108">
    <property type="protein sequence ID" value="ACF45924.1"/>
    <property type="molecule type" value="Genomic_DNA"/>
</dbReference>
<dbReference type="RefSeq" id="WP_012505461.1">
    <property type="nucleotide sequence ID" value="NC_011059.1"/>
</dbReference>
<dbReference type="SMR" id="B4S787"/>
<dbReference type="STRING" id="290512.Paes_0880"/>
<dbReference type="KEGG" id="paa:Paes_0880"/>
<dbReference type="eggNOG" id="COG0030">
    <property type="taxonomic scope" value="Bacteria"/>
</dbReference>
<dbReference type="HOGENOM" id="CLU_041220_0_1_10"/>
<dbReference type="Proteomes" id="UP000002725">
    <property type="component" value="Chromosome"/>
</dbReference>
<dbReference type="GO" id="GO:0005829">
    <property type="term" value="C:cytosol"/>
    <property type="evidence" value="ECO:0007669"/>
    <property type="project" value="TreeGrafter"/>
</dbReference>
<dbReference type="GO" id="GO:0052908">
    <property type="term" value="F:16S rRNA (adenine(1518)-N(6)/adenine(1519)-N(6))-dimethyltransferase activity"/>
    <property type="evidence" value="ECO:0007669"/>
    <property type="project" value="UniProtKB-EC"/>
</dbReference>
<dbReference type="GO" id="GO:0003723">
    <property type="term" value="F:RNA binding"/>
    <property type="evidence" value="ECO:0007669"/>
    <property type="project" value="UniProtKB-KW"/>
</dbReference>
<dbReference type="CDD" id="cd02440">
    <property type="entry name" value="AdoMet_MTases"/>
    <property type="match status" value="1"/>
</dbReference>
<dbReference type="FunFam" id="3.40.50.150:FF:000023">
    <property type="entry name" value="Ribosomal RNA small subunit methyltransferase A"/>
    <property type="match status" value="1"/>
</dbReference>
<dbReference type="Gene3D" id="1.10.8.100">
    <property type="entry name" value="Ribosomal RNA adenine dimethylase-like, domain 2"/>
    <property type="match status" value="1"/>
</dbReference>
<dbReference type="Gene3D" id="3.40.50.150">
    <property type="entry name" value="Vaccinia Virus protein VP39"/>
    <property type="match status" value="1"/>
</dbReference>
<dbReference type="HAMAP" id="MF_00607">
    <property type="entry name" value="16SrRNA_methyltr_A"/>
    <property type="match status" value="1"/>
</dbReference>
<dbReference type="InterPro" id="IPR001737">
    <property type="entry name" value="KsgA/Erm"/>
</dbReference>
<dbReference type="InterPro" id="IPR023165">
    <property type="entry name" value="rRNA_Ade_diMease-like_C"/>
</dbReference>
<dbReference type="InterPro" id="IPR020596">
    <property type="entry name" value="rRNA_Ade_Mease_Trfase_CS"/>
</dbReference>
<dbReference type="InterPro" id="IPR020598">
    <property type="entry name" value="rRNA_Ade_methylase_Trfase_N"/>
</dbReference>
<dbReference type="InterPro" id="IPR011530">
    <property type="entry name" value="rRNA_adenine_dimethylase"/>
</dbReference>
<dbReference type="InterPro" id="IPR029063">
    <property type="entry name" value="SAM-dependent_MTases_sf"/>
</dbReference>
<dbReference type="NCBIfam" id="TIGR00755">
    <property type="entry name" value="ksgA"/>
    <property type="match status" value="1"/>
</dbReference>
<dbReference type="PANTHER" id="PTHR11727">
    <property type="entry name" value="DIMETHYLADENOSINE TRANSFERASE"/>
    <property type="match status" value="1"/>
</dbReference>
<dbReference type="PANTHER" id="PTHR11727:SF7">
    <property type="entry name" value="DIMETHYLADENOSINE TRANSFERASE-RELATED"/>
    <property type="match status" value="1"/>
</dbReference>
<dbReference type="Pfam" id="PF00398">
    <property type="entry name" value="RrnaAD"/>
    <property type="match status" value="1"/>
</dbReference>
<dbReference type="SMART" id="SM00650">
    <property type="entry name" value="rADc"/>
    <property type="match status" value="1"/>
</dbReference>
<dbReference type="SUPFAM" id="SSF53335">
    <property type="entry name" value="S-adenosyl-L-methionine-dependent methyltransferases"/>
    <property type="match status" value="1"/>
</dbReference>
<dbReference type="PROSITE" id="PS01131">
    <property type="entry name" value="RRNA_A_DIMETH"/>
    <property type="match status" value="1"/>
</dbReference>
<dbReference type="PROSITE" id="PS51689">
    <property type="entry name" value="SAM_RNA_A_N6_MT"/>
    <property type="match status" value="1"/>
</dbReference>
<proteinExistence type="inferred from homology"/>
<gene>
    <name evidence="1" type="primary">rsmA</name>
    <name evidence="1" type="synonym">ksgA</name>
    <name type="ordered locus">Paes_0880</name>
</gene>
<comment type="function">
    <text evidence="1">Specifically dimethylates two adjacent adenosines (A1518 and A1519) in the loop of a conserved hairpin near the 3'-end of 16S rRNA in the 30S particle. May play a critical role in biogenesis of 30S subunits.</text>
</comment>
<comment type="catalytic activity">
    <reaction evidence="1">
        <text>adenosine(1518)/adenosine(1519) in 16S rRNA + 4 S-adenosyl-L-methionine = N(6)-dimethyladenosine(1518)/N(6)-dimethyladenosine(1519) in 16S rRNA + 4 S-adenosyl-L-homocysteine + 4 H(+)</text>
        <dbReference type="Rhea" id="RHEA:19609"/>
        <dbReference type="Rhea" id="RHEA-COMP:10232"/>
        <dbReference type="Rhea" id="RHEA-COMP:10233"/>
        <dbReference type="ChEBI" id="CHEBI:15378"/>
        <dbReference type="ChEBI" id="CHEBI:57856"/>
        <dbReference type="ChEBI" id="CHEBI:59789"/>
        <dbReference type="ChEBI" id="CHEBI:74411"/>
        <dbReference type="ChEBI" id="CHEBI:74493"/>
        <dbReference type="EC" id="2.1.1.182"/>
    </reaction>
</comment>
<comment type="subcellular location">
    <subcellularLocation>
        <location evidence="1">Cytoplasm</location>
    </subcellularLocation>
</comment>
<comment type="similarity">
    <text evidence="1">Belongs to the class I-like SAM-binding methyltransferase superfamily. rRNA adenine N(6)-methyltransferase family. RsmA subfamily.</text>
</comment>
<accession>B4S787</accession>